<sequence>MADTLMSDIPFWQSKTLDDMTDAEWESLCDGCGQCCLHKLMDEDTDEIYFTNVACRQLNIKTCQCRNYERRFEYEPDCIKLTRDNLPTFEWLPMTCAYRLLAEGKGLPGWHPLLTGSKAAMHGERISVRHIAVKESEVRDWQDHILNKPSWAD</sequence>
<gene>
    <name type="ordered locus">CKO_01185</name>
</gene>
<reference key="1">
    <citation type="submission" date="2007-08" db="EMBL/GenBank/DDBJ databases">
        <authorList>
            <consortium name="The Citrobacter koseri Genome Sequencing Project"/>
            <person name="McClelland M."/>
            <person name="Sanderson E.K."/>
            <person name="Porwollik S."/>
            <person name="Spieth J."/>
            <person name="Clifton W.S."/>
            <person name="Latreille P."/>
            <person name="Courtney L."/>
            <person name="Wang C."/>
            <person name="Pepin K."/>
            <person name="Bhonagiri V."/>
            <person name="Nash W."/>
            <person name="Johnson M."/>
            <person name="Thiruvilangam P."/>
            <person name="Wilson R."/>
        </authorList>
    </citation>
    <scope>NUCLEOTIDE SEQUENCE [LARGE SCALE GENOMIC DNA]</scope>
    <source>
        <strain>ATCC BAA-895 / CDC 4225-83 / SGSC4696</strain>
    </source>
</reference>
<keyword id="KW-1185">Reference proteome</keyword>
<protein>
    <recommendedName>
        <fullName evidence="1">UPF0260 protein CKO_01185</fullName>
    </recommendedName>
</protein>
<feature type="chain" id="PRO_1000044790" description="UPF0260 protein CKO_01185">
    <location>
        <begin position="1"/>
        <end position="153"/>
    </location>
</feature>
<accession>A8AFR2</accession>
<organism>
    <name type="scientific">Citrobacter koseri (strain ATCC BAA-895 / CDC 4225-83 / SGSC4696)</name>
    <dbReference type="NCBI Taxonomy" id="290338"/>
    <lineage>
        <taxon>Bacteria</taxon>
        <taxon>Pseudomonadati</taxon>
        <taxon>Pseudomonadota</taxon>
        <taxon>Gammaproteobacteria</taxon>
        <taxon>Enterobacterales</taxon>
        <taxon>Enterobacteriaceae</taxon>
        <taxon>Citrobacter</taxon>
    </lineage>
</organism>
<proteinExistence type="inferred from homology"/>
<comment type="similarity">
    <text evidence="1">Belongs to the UPF0260 family.</text>
</comment>
<dbReference type="EMBL" id="CP000822">
    <property type="protein sequence ID" value="ABV12325.1"/>
    <property type="molecule type" value="Genomic_DNA"/>
</dbReference>
<dbReference type="STRING" id="290338.CKO_01185"/>
<dbReference type="KEGG" id="cko:CKO_01185"/>
<dbReference type="HOGENOM" id="CLU_109769_2_0_6"/>
<dbReference type="OrthoDB" id="9786855at2"/>
<dbReference type="Proteomes" id="UP000008148">
    <property type="component" value="Chromosome"/>
</dbReference>
<dbReference type="HAMAP" id="MF_00676">
    <property type="entry name" value="UPF0260"/>
    <property type="match status" value="1"/>
</dbReference>
<dbReference type="InterPro" id="IPR005358">
    <property type="entry name" value="Puta_zinc/iron-chelating_dom"/>
</dbReference>
<dbReference type="InterPro" id="IPR008228">
    <property type="entry name" value="UCP006173"/>
</dbReference>
<dbReference type="NCBIfam" id="NF003498">
    <property type="entry name" value="PRK05170.1-1"/>
    <property type="match status" value="1"/>
</dbReference>
<dbReference type="NCBIfam" id="NF003501">
    <property type="entry name" value="PRK05170.1-5"/>
    <property type="match status" value="1"/>
</dbReference>
<dbReference type="NCBIfam" id="NF003503">
    <property type="entry name" value="PRK05170.2-1"/>
    <property type="match status" value="1"/>
</dbReference>
<dbReference type="NCBIfam" id="NF003507">
    <property type="entry name" value="PRK05170.2-5"/>
    <property type="match status" value="1"/>
</dbReference>
<dbReference type="PANTHER" id="PTHR37421">
    <property type="entry name" value="UPF0260 PROTEIN YCGN"/>
    <property type="match status" value="1"/>
</dbReference>
<dbReference type="PANTHER" id="PTHR37421:SF1">
    <property type="entry name" value="UPF0260 PROTEIN YCGN"/>
    <property type="match status" value="1"/>
</dbReference>
<dbReference type="Pfam" id="PF03692">
    <property type="entry name" value="CxxCxxCC"/>
    <property type="match status" value="1"/>
</dbReference>
<dbReference type="PIRSF" id="PIRSF006173">
    <property type="entry name" value="UCP006173"/>
    <property type="match status" value="1"/>
</dbReference>
<evidence type="ECO:0000255" key="1">
    <source>
        <dbReference type="HAMAP-Rule" id="MF_00676"/>
    </source>
</evidence>
<name>Y1185_CITK8</name>